<protein>
    <recommendedName>
        <fullName evidence="1">Glucose-6-phosphate isomerase</fullName>
        <shortName evidence="1">GPI</shortName>
        <ecNumber evidence="1">5.3.1.9</ecNumber>
    </recommendedName>
    <alternativeName>
        <fullName evidence="1">Phosphoglucose isomerase</fullName>
        <shortName evidence="1">PGI</shortName>
    </alternativeName>
    <alternativeName>
        <fullName evidence="1">Phosphohexose isomerase</fullName>
        <shortName evidence="1">PHI</shortName>
    </alternativeName>
</protein>
<keyword id="KW-0963">Cytoplasm</keyword>
<keyword id="KW-0312">Gluconeogenesis</keyword>
<keyword id="KW-0324">Glycolysis</keyword>
<keyword id="KW-0413">Isomerase</keyword>
<evidence type="ECO:0000255" key="1">
    <source>
        <dbReference type="HAMAP-Rule" id="MF_00473"/>
    </source>
</evidence>
<organism>
    <name type="scientific">Prochlorococcus marinus subsp. pastoris (strain CCMP1986 / NIES-2087 / MED4)</name>
    <dbReference type="NCBI Taxonomy" id="59919"/>
    <lineage>
        <taxon>Bacteria</taxon>
        <taxon>Bacillati</taxon>
        <taxon>Cyanobacteriota</taxon>
        <taxon>Cyanophyceae</taxon>
        <taxon>Synechococcales</taxon>
        <taxon>Prochlorococcaceae</taxon>
        <taxon>Prochlorococcus</taxon>
    </lineage>
</organism>
<reference key="1">
    <citation type="journal article" date="2003" name="Nature">
        <title>Genome divergence in two Prochlorococcus ecotypes reflects oceanic niche differentiation.</title>
        <authorList>
            <person name="Rocap G."/>
            <person name="Larimer F.W."/>
            <person name="Lamerdin J.E."/>
            <person name="Malfatti S."/>
            <person name="Chain P."/>
            <person name="Ahlgren N.A."/>
            <person name="Arellano A."/>
            <person name="Coleman M."/>
            <person name="Hauser L."/>
            <person name="Hess W.R."/>
            <person name="Johnson Z.I."/>
            <person name="Land M.L."/>
            <person name="Lindell D."/>
            <person name="Post A.F."/>
            <person name="Regala W."/>
            <person name="Shah M."/>
            <person name="Shaw S.L."/>
            <person name="Steglich C."/>
            <person name="Sullivan M.B."/>
            <person name="Ting C.S."/>
            <person name="Tolonen A."/>
            <person name="Webb E.A."/>
            <person name="Zinser E.R."/>
            <person name="Chisholm S.W."/>
        </authorList>
    </citation>
    <scope>NUCLEOTIDE SEQUENCE [LARGE SCALE GENOMIC DNA]</scope>
    <source>
        <strain>CCMP1986 / NIES-2087 / MED4</strain>
    </source>
</reference>
<proteinExistence type="inferred from homology"/>
<comment type="function">
    <text evidence="1">Catalyzes the reversible isomerization of glucose-6-phosphate to fructose-6-phosphate.</text>
</comment>
<comment type="catalytic activity">
    <reaction evidence="1">
        <text>alpha-D-glucose 6-phosphate = beta-D-fructose 6-phosphate</text>
        <dbReference type="Rhea" id="RHEA:11816"/>
        <dbReference type="ChEBI" id="CHEBI:57634"/>
        <dbReference type="ChEBI" id="CHEBI:58225"/>
        <dbReference type="EC" id="5.3.1.9"/>
    </reaction>
</comment>
<comment type="pathway">
    <text evidence="1">Carbohydrate biosynthesis; gluconeogenesis.</text>
</comment>
<comment type="pathway">
    <text evidence="1">Carbohydrate degradation; glycolysis; D-glyceraldehyde 3-phosphate and glycerone phosphate from D-glucose: step 2/4.</text>
</comment>
<comment type="subcellular location">
    <subcellularLocation>
        <location evidence="1">Cytoplasm</location>
    </subcellularLocation>
</comment>
<comment type="similarity">
    <text evidence="1">Belongs to the GPI family.</text>
</comment>
<feature type="chain" id="PRO_0000180706" description="Glucose-6-phosphate isomerase">
    <location>
        <begin position="1"/>
        <end position="526"/>
    </location>
</feature>
<feature type="active site" description="Proton donor" evidence="1">
    <location>
        <position position="323"/>
    </location>
</feature>
<feature type="active site" evidence="1">
    <location>
        <position position="352"/>
    </location>
</feature>
<feature type="active site" evidence="1">
    <location>
        <position position="454"/>
    </location>
</feature>
<dbReference type="EC" id="5.3.1.9" evidence="1"/>
<dbReference type="EMBL" id="BX548174">
    <property type="protein sequence ID" value="CAE19349.1"/>
    <property type="molecule type" value="Genomic_DNA"/>
</dbReference>
<dbReference type="RefSeq" id="WP_011132523.1">
    <property type="nucleotide sequence ID" value="NC_005072.1"/>
</dbReference>
<dbReference type="SMR" id="Q7V1I1"/>
<dbReference type="STRING" id="59919.PMM0890"/>
<dbReference type="KEGG" id="pmm:PMM0890"/>
<dbReference type="eggNOG" id="COG0166">
    <property type="taxonomic scope" value="Bacteria"/>
</dbReference>
<dbReference type="HOGENOM" id="CLU_033288_0_0_3"/>
<dbReference type="OrthoDB" id="140919at2"/>
<dbReference type="UniPathway" id="UPA00109">
    <property type="reaction ID" value="UER00181"/>
</dbReference>
<dbReference type="UniPathway" id="UPA00138"/>
<dbReference type="Proteomes" id="UP000001026">
    <property type="component" value="Chromosome"/>
</dbReference>
<dbReference type="GO" id="GO:0005829">
    <property type="term" value="C:cytosol"/>
    <property type="evidence" value="ECO:0007669"/>
    <property type="project" value="TreeGrafter"/>
</dbReference>
<dbReference type="GO" id="GO:0097367">
    <property type="term" value="F:carbohydrate derivative binding"/>
    <property type="evidence" value="ECO:0007669"/>
    <property type="project" value="InterPro"/>
</dbReference>
<dbReference type="GO" id="GO:0004347">
    <property type="term" value="F:glucose-6-phosphate isomerase activity"/>
    <property type="evidence" value="ECO:0007669"/>
    <property type="project" value="UniProtKB-UniRule"/>
</dbReference>
<dbReference type="GO" id="GO:0048029">
    <property type="term" value="F:monosaccharide binding"/>
    <property type="evidence" value="ECO:0007669"/>
    <property type="project" value="TreeGrafter"/>
</dbReference>
<dbReference type="GO" id="GO:0006094">
    <property type="term" value="P:gluconeogenesis"/>
    <property type="evidence" value="ECO:0007669"/>
    <property type="project" value="UniProtKB-UniRule"/>
</dbReference>
<dbReference type="GO" id="GO:0051156">
    <property type="term" value="P:glucose 6-phosphate metabolic process"/>
    <property type="evidence" value="ECO:0007669"/>
    <property type="project" value="TreeGrafter"/>
</dbReference>
<dbReference type="GO" id="GO:0006096">
    <property type="term" value="P:glycolytic process"/>
    <property type="evidence" value="ECO:0007669"/>
    <property type="project" value="UniProtKB-UniRule"/>
</dbReference>
<dbReference type="CDD" id="cd05015">
    <property type="entry name" value="SIS_PGI_1"/>
    <property type="match status" value="1"/>
</dbReference>
<dbReference type="CDD" id="cd05016">
    <property type="entry name" value="SIS_PGI_2"/>
    <property type="match status" value="1"/>
</dbReference>
<dbReference type="FunFam" id="3.40.50.10490:FF:000021">
    <property type="entry name" value="Glucose-6-phosphate isomerase"/>
    <property type="match status" value="1"/>
</dbReference>
<dbReference type="Gene3D" id="3.40.50.10490">
    <property type="entry name" value="Glucose-6-phosphate isomerase like protein, domain 1"/>
    <property type="match status" value="2"/>
</dbReference>
<dbReference type="HAMAP" id="MF_00473">
    <property type="entry name" value="G6P_isomerase"/>
    <property type="match status" value="1"/>
</dbReference>
<dbReference type="InterPro" id="IPR001672">
    <property type="entry name" value="G6P_Isomerase"/>
</dbReference>
<dbReference type="InterPro" id="IPR018189">
    <property type="entry name" value="Phosphoglucose_isomerase_CS"/>
</dbReference>
<dbReference type="InterPro" id="IPR046348">
    <property type="entry name" value="SIS_dom_sf"/>
</dbReference>
<dbReference type="InterPro" id="IPR035476">
    <property type="entry name" value="SIS_PGI_1"/>
</dbReference>
<dbReference type="InterPro" id="IPR035482">
    <property type="entry name" value="SIS_PGI_2"/>
</dbReference>
<dbReference type="NCBIfam" id="NF010696">
    <property type="entry name" value="PRK14096.1"/>
    <property type="match status" value="1"/>
</dbReference>
<dbReference type="PANTHER" id="PTHR11469">
    <property type="entry name" value="GLUCOSE-6-PHOSPHATE ISOMERASE"/>
    <property type="match status" value="1"/>
</dbReference>
<dbReference type="PANTHER" id="PTHR11469:SF1">
    <property type="entry name" value="GLUCOSE-6-PHOSPHATE ISOMERASE"/>
    <property type="match status" value="1"/>
</dbReference>
<dbReference type="Pfam" id="PF00342">
    <property type="entry name" value="PGI"/>
    <property type="match status" value="2"/>
</dbReference>
<dbReference type="PRINTS" id="PR00662">
    <property type="entry name" value="G6PISOMERASE"/>
</dbReference>
<dbReference type="SUPFAM" id="SSF53697">
    <property type="entry name" value="SIS domain"/>
    <property type="match status" value="1"/>
</dbReference>
<dbReference type="PROSITE" id="PS00174">
    <property type="entry name" value="P_GLUCOSE_ISOMERASE_2"/>
    <property type="match status" value="1"/>
</dbReference>
<dbReference type="PROSITE" id="PS51463">
    <property type="entry name" value="P_GLUCOSE_ISOMERASE_3"/>
    <property type="match status" value="1"/>
</dbReference>
<gene>
    <name evidence="1" type="primary">pgi</name>
    <name type="ordered locus">PMM0890</name>
</gene>
<sequence>MNNDFNSWDKYCNYLWFDKQVNIWLDISKINFTLDQISSLENKFKKVFSALKELEAGAISNIDEKRQVGHYWLRNPSVAPSNLIKDAINNEIRDISEFGEKILEGKITNNKNQKFTNVLWIGIGGSGLGPLLITEALQENSCGLNFSYIDNIDPFLISEKLDELSDKLATTLFVVVSKSGGTPEPKIAMNIIKKHVENKNLDWNSNAIAITMKDSQLYKKAQLENWLKIFNLPDWVGGRTSITSSVGLLPLALINRDVSEFIKGAAIMDDLTRIPNIKDNPAALLSSAWFFSGDGIGKRDMVVLPYRDRLQVFSKYLQQLVMESLGKKFNRKGEIVHQGISVFGNKGSTDQHAYVQQLRDGIDNFFCVFIELLDTPNSNFYFDSENPKEFLSGFLQGTRSALSNENRQSITITLDKLSCLTLGALIALFERAVSFYAELVDINAYDQPGVEAGKKAAAEIIDYQKQVTEIFNNGEELSIKEITSLLRNSSAEPIFFIIRQMCFGNDDYLINGDWSKPSTIRIKKIS</sequence>
<accession>Q7V1I1</accession>
<name>G6PI_PROMP</name>